<evidence type="ECO:0000255" key="1">
    <source>
        <dbReference type="HAMAP-Rule" id="MF_01910"/>
    </source>
</evidence>
<reference key="1">
    <citation type="journal article" date="2008" name="J. Bacteriol.">
        <title>Genome sequence of Thermofilum pendens reveals an exceptional loss of biosynthetic pathways without genome reduction.</title>
        <authorList>
            <person name="Anderson I."/>
            <person name="Rodriguez J."/>
            <person name="Susanti D."/>
            <person name="Porat I."/>
            <person name="Reich C."/>
            <person name="Ulrich L.E."/>
            <person name="Elkins J.G."/>
            <person name="Mavromatis K."/>
            <person name="Lykidis A."/>
            <person name="Kim E."/>
            <person name="Thompson L.S."/>
            <person name="Nolan M."/>
            <person name="Land M."/>
            <person name="Copeland A."/>
            <person name="Lapidus A."/>
            <person name="Lucas S."/>
            <person name="Detter C."/>
            <person name="Zhulin I.B."/>
            <person name="Olsen G.J."/>
            <person name="Whitman W."/>
            <person name="Mukhopadhyay B."/>
            <person name="Bristow J."/>
            <person name="Kyrpides N."/>
        </authorList>
    </citation>
    <scope>NUCLEOTIDE SEQUENCE [LARGE SCALE GENOMIC DNA]</scope>
    <source>
        <strain>DSM 2475 / Hrk 5</strain>
    </source>
</reference>
<accession>A1RXN7</accession>
<comment type="function">
    <text evidence="1">Probable RNase involved in rRNA stability through maturation and/or degradation of precursor rRNAs. Binds to RNA in loop regions with AU-rich sequences.</text>
</comment>
<comment type="similarity">
    <text evidence="1">Belongs to the FAU-1 family.</text>
</comment>
<dbReference type="EC" id="3.1.26.-" evidence="1"/>
<dbReference type="EMBL" id="CP000505">
    <property type="protein sequence ID" value="ABL77967.1"/>
    <property type="molecule type" value="Genomic_DNA"/>
</dbReference>
<dbReference type="RefSeq" id="WP_011752232.1">
    <property type="nucleotide sequence ID" value="NC_008698.1"/>
</dbReference>
<dbReference type="SMR" id="A1RXN7"/>
<dbReference type="STRING" id="368408.Tpen_0561"/>
<dbReference type="EnsemblBacteria" id="ABL77967">
    <property type="protein sequence ID" value="ABL77967"/>
    <property type="gene ID" value="Tpen_0561"/>
</dbReference>
<dbReference type="GeneID" id="4600604"/>
<dbReference type="KEGG" id="tpe:Tpen_0561"/>
<dbReference type="eggNOG" id="arCOG04307">
    <property type="taxonomic scope" value="Archaea"/>
</dbReference>
<dbReference type="HOGENOM" id="CLU_044303_0_0_2"/>
<dbReference type="OrthoDB" id="84798at2157"/>
<dbReference type="Proteomes" id="UP000000641">
    <property type="component" value="Chromosome"/>
</dbReference>
<dbReference type="GO" id="GO:0035925">
    <property type="term" value="F:mRNA 3'-UTR AU-rich region binding"/>
    <property type="evidence" value="ECO:0007669"/>
    <property type="project" value="UniProtKB-UniRule"/>
</dbReference>
<dbReference type="GO" id="GO:0016891">
    <property type="term" value="F:RNA endonuclease activity, producing 5'-phosphomonoesters"/>
    <property type="evidence" value="ECO:0007669"/>
    <property type="project" value="UniProtKB-UniRule"/>
</dbReference>
<dbReference type="GO" id="GO:0006364">
    <property type="term" value="P:rRNA processing"/>
    <property type="evidence" value="ECO:0007669"/>
    <property type="project" value="UniProtKB-UniRule"/>
</dbReference>
<dbReference type="Gene3D" id="2.40.380.10">
    <property type="entry name" value="FomD-like"/>
    <property type="match status" value="1"/>
</dbReference>
<dbReference type="HAMAP" id="MF_01910">
    <property type="entry name" value="RNA_binding_AU_1"/>
    <property type="match status" value="1"/>
</dbReference>
<dbReference type="InterPro" id="IPR007295">
    <property type="entry name" value="DUF402"/>
</dbReference>
<dbReference type="InterPro" id="IPR035930">
    <property type="entry name" value="FomD-like_sf"/>
</dbReference>
<dbReference type="InterPro" id="IPR050212">
    <property type="entry name" value="Ntdp-like"/>
</dbReference>
<dbReference type="InterPro" id="IPR016730">
    <property type="entry name" value="RNA-bd_FAU-1"/>
</dbReference>
<dbReference type="PANTHER" id="PTHR39159">
    <property type="match status" value="1"/>
</dbReference>
<dbReference type="PANTHER" id="PTHR39159:SF1">
    <property type="entry name" value="UPF0374 PROTEIN YGAC"/>
    <property type="match status" value="1"/>
</dbReference>
<dbReference type="Pfam" id="PF04167">
    <property type="entry name" value="DUF402"/>
    <property type="match status" value="1"/>
</dbReference>
<dbReference type="SUPFAM" id="SSF159234">
    <property type="entry name" value="FomD-like"/>
    <property type="match status" value="1"/>
</dbReference>
<sequence>MIRVRGIHSTAIAGLLDEAGFRFADLSQELLARIPQLRVEERVLVTVKDTDDRSGVVVLGDRAVVEKVAYLLRAVIPGALVSYVGEGPYTTYAVRLLSRVEGDVYEAEYSPGKRTTVKLRRPHVEGEVIMAHVIRASPEAPLLKEGVAITGSLVRLVQFDRHSVSEHIRDENLRLQLLTLAMTSAPTGWGVHFRSASKRASIVDVMAEIKALSEKAEKILKEVAPKEPGVVVPGEAIAIVEIPADASIRMDALRSRYYPTLPLHHLLKRLGDDELSRAVDFSERLLAGCEKCLSSTGAIEVFLERLSSLKGRQVSVLHRKVAGAGHVWSAEVESVKRMTVVLKRVVSSPGLYDGFEGLKREPGDVIRSYTWLFGRAVVHFYTSARGELKGVYVNINAPVFFAGNANTLGYVDLGVDVTRAADEEPKVVDLAEFLDLVERGVLDKQLAGSYLEFAESVKHLLEKDIGEDLPARIMQAQKSIFSFETDKLLAV</sequence>
<keyword id="KW-0255">Endonuclease</keyword>
<keyword id="KW-0378">Hydrolase</keyword>
<keyword id="KW-0540">Nuclease</keyword>
<keyword id="KW-1185">Reference proteome</keyword>
<keyword id="KW-0694">RNA-binding</keyword>
<keyword id="KW-0698">rRNA processing</keyword>
<proteinExistence type="inferred from homology"/>
<organism>
    <name type="scientific">Thermofilum pendens (strain DSM 2475 / Hrk 5)</name>
    <dbReference type="NCBI Taxonomy" id="368408"/>
    <lineage>
        <taxon>Archaea</taxon>
        <taxon>Thermoproteota</taxon>
        <taxon>Thermoprotei</taxon>
        <taxon>Thermofilales</taxon>
        <taxon>Thermofilaceae</taxon>
        <taxon>Thermofilum</taxon>
    </lineage>
</organism>
<gene>
    <name evidence="1" type="primary">fau-1</name>
    <name type="ordered locus">Tpen_0561</name>
</gene>
<feature type="chain" id="PRO_0000334214" description="Probable ribonuclease FAU-1">
    <location>
        <begin position="1"/>
        <end position="491"/>
    </location>
</feature>
<protein>
    <recommendedName>
        <fullName evidence="1">Probable ribonuclease FAU-1</fullName>
        <ecNumber evidence="1">3.1.26.-</ecNumber>
    </recommendedName>
    <alternativeName>
        <fullName evidence="1">RNA-binding protein FAU-1</fullName>
    </alternativeName>
</protein>
<name>FAU1_THEPD</name>